<name>E312_ADE02</name>
<feature type="chain" id="PRO_0000221741" description="Early E3A 12.5 kDa protein">
    <location>
        <begin position="1"/>
        <end position="107"/>
    </location>
</feature>
<proteinExistence type="evidence at protein level"/>
<protein>
    <recommendedName>
        <fullName>Early E3A 12.5 kDa protein</fullName>
        <shortName>E3-12,5K</shortName>
    </recommendedName>
</protein>
<accession>P27311</accession>
<organismHost>
    <name type="scientific">Homo sapiens</name>
    <name type="common">Human</name>
    <dbReference type="NCBI Taxonomy" id="9606"/>
</organismHost>
<reference key="1">
    <citation type="journal article" date="1981" name="Nucleic Acids Res.">
        <title>Nucleotide sequence of the EcoRI E fragment of adenovirus 2 genome.</title>
        <authorList>
            <person name="Herisse J."/>
            <person name="Galibert F."/>
        </authorList>
    </citation>
    <scope>NUCLEOTIDE SEQUENCE [GENOMIC DNA]</scope>
</reference>
<reference key="2">
    <citation type="journal article" date="1992" name="Virology">
        <title>A 12,500 MW protein is coded by region E3 of adenovirus.</title>
        <authorList>
            <person name="Hawkins L.K."/>
            <person name="Wold W.S.M."/>
        </authorList>
    </citation>
    <scope>CHARACTERIZATION</scope>
</reference>
<comment type="similarity">
    <text evidence="1">Belongs to the adenoviridae E3A-2 family.</text>
</comment>
<evidence type="ECO:0000305" key="1"/>
<keyword id="KW-0244">Early protein</keyword>
<keyword id="KW-1185">Reference proteome</keyword>
<sequence length="107" mass="12394">MTSGEAERLRLTHLDHCRRHKCFARGSGEFCYFELPEEHIEGPAHGVRLTTQVELTRSLIREFTKRPLLVERERGPCVLTVVCNCPNPGLHQDLCCHLCAEYNKYRN</sequence>
<organism>
    <name type="scientific">Human adenovirus C serotype 2</name>
    <name type="common">HAdV-2</name>
    <name type="synonym">Human adenovirus 2</name>
    <dbReference type="NCBI Taxonomy" id="10515"/>
    <lineage>
        <taxon>Viruses</taxon>
        <taxon>Varidnaviria</taxon>
        <taxon>Bamfordvirae</taxon>
        <taxon>Preplasmiviricota</taxon>
        <taxon>Tectiliviricetes</taxon>
        <taxon>Rowavirales</taxon>
        <taxon>Adenoviridae</taxon>
        <taxon>Mastadenovirus</taxon>
        <taxon>Human mastadenovirus C</taxon>
    </lineage>
</organism>
<dbReference type="EMBL" id="J01917">
    <property type="status" value="NOT_ANNOTATED_CDS"/>
    <property type="molecule type" value="Genomic_DNA"/>
</dbReference>
<dbReference type="PIR" id="A42536">
    <property type="entry name" value="ERADT1"/>
</dbReference>
<dbReference type="RefSeq" id="AP_000182.1">
    <property type="nucleotide sequence ID" value="AC_000007.1"/>
</dbReference>
<dbReference type="Proteomes" id="UP000008167">
    <property type="component" value="Segment"/>
</dbReference>
<dbReference type="InterPro" id="IPR007912">
    <property type="entry name" value="Adeno_E3A"/>
</dbReference>
<dbReference type="Pfam" id="PF05248">
    <property type="entry name" value="Adeno_E3A"/>
    <property type="match status" value="1"/>
</dbReference>